<organism>
    <name type="scientific">Aspergillus clavatus (strain ATCC 1007 / CBS 513.65 / DSM 816 / NCTC 3887 / NRRL 1 / QM 1276 / 107)</name>
    <dbReference type="NCBI Taxonomy" id="344612"/>
    <lineage>
        <taxon>Eukaryota</taxon>
        <taxon>Fungi</taxon>
        <taxon>Dikarya</taxon>
        <taxon>Ascomycota</taxon>
        <taxon>Pezizomycotina</taxon>
        <taxon>Eurotiomycetes</taxon>
        <taxon>Eurotiomycetidae</taxon>
        <taxon>Eurotiales</taxon>
        <taxon>Aspergillaceae</taxon>
        <taxon>Aspergillus</taxon>
        <taxon>Aspergillus subgen. Fumigati</taxon>
    </lineage>
</organism>
<comment type="function">
    <text evidence="1">Component of the SCF(sconB) E3 ubiquitin ligase complex involved in the regulation of sulfur metabolite repression, probably by mediating the inactivation or degradation of the metR transcription factor.</text>
</comment>
<comment type="pathway">
    <text>Protein modification; protein ubiquitination.</text>
</comment>
<comment type="subunit">
    <text evidence="1">Component of the SCF(sconB) E3 ubiquitin ligase complex.</text>
</comment>
<comment type="similarity">
    <text evidence="4">Belongs to the WD repeat MET30/SCONB/SCON-2 family.</text>
</comment>
<dbReference type="EMBL" id="DS027045">
    <property type="protein sequence ID" value="EAW14315.1"/>
    <property type="molecule type" value="Genomic_DNA"/>
</dbReference>
<dbReference type="RefSeq" id="XP_001275741.1">
    <property type="nucleotide sequence ID" value="XM_001275740.1"/>
</dbReference>
<dbReference type="SMR" id="A1C7E4"/>
<dbReference type="STRING" id="344612.A1C7E4"/>
<dbReference type="EnsemblFungi" id="EAW14315">
    <property type="protein sequence ID" value="EAW14315"/>
    <property type="gene ID" value="ACLA_073500"/>
</dbReference>
<dbReference type="GeneID" id="4707886"/>
<dbReference type="KEGG" id="act:ACLA_073500"/>
<dbReference type="VEuPathDB" id="FungiDB:ACLA_073500"/>
<dbReference type="eggNOG" id="KOG0274">
    <property type="taxonomic scope" value="Eukaryota"/>
</dbReference>
<dbReference type="HOGENOM" id="CLU_000288_103_1_1"/>
<dbReference type="OMA" id="GIAHVWS"/>
<dbReference type="OrthoDB" id="5580488at2759"/>
<dbReference type="UniPathway" id="UPA00143"/>
<dbReference type="Proteomes" id="UP000006701">
    <property type="component" value="Unassembled WGS sequence"/>
</dbReference>
<dbReference type="GO" id="GO:0016567">
    <property type="term" value="P:protein ubiquitination"/>
    <property type="evidence" value="ECO:0007669"/>
    <property type="project" value="UniProtKB-UniPathway"/>
</dbReference>
<dbReference type="CDD" id="cd22147">
    <property type="entry name" value="F-box_SpPof1-like"/>
    <property type="match status" value="1"/>
</dbReference>
<dbReference type="CDD" id="cd00200">
    <property type="entry name" value="WD40"/>
    <property type="match status" value="1"/>
</dbReference>
<dbReference type="FunFam" id="1.20.1280.50:FF:000016">
    <property type="entry name" value="E3 ubiquitin ligase complex SCF subunit sconB"/>
    <property type="match status" value="1"/>
</dbReference>
<dbReference type="FunFam" id="2.130.10.10:FF:000770">
    <property type="entry name" value="E3 ubiquitin ligase complex SCF subunit sconB"/>
    <property type="match status" value="1"/>
</dbReference>
<dbReference type="FunFam" id="2.130.10.10:FF:000890">
    <property type="entry name" value="Probable E3 ubiquitin ligase complex SCF subunit sconB"/>
    <property type="match status" value="1"/>
</dbReference>
<dbReference type="Gene3D" id="1.20.1280.50">
    <property type="match status" value="1"/>
</dbReference>
<dbReference type="Gene3D" id="2.130.10.10">
    <property type="entry name" value="YVTN repeat-like/Quinoprotein amine dehydrogenase"/>
    <property type="match status" value="2"/>
</dbReference>
<dbReference type="InterPro" id="IPR036047">
    <property type="entry name" value="F-box-like_dom_sf"/>
</dbReference>
<dbReference type="InterPro" id="IPR001810">
    <property type="entry name" value="F-box_dom"/>
</dbReference>
<dbReference type="InterPro" id="IPR020472">
    <property type="entry name" value="G-protein_beta_WD-40_rep"/>
</dbReference>
<dbReference type="InterPro" id="IPR051075">
    <property type="entry name" value="SCF_subunit_WD-repeat"/>
</dbReference>
<dbReference type="InterPro" id="IPR015943">
    <property type="entry name" value="WD40/YVTN_repeat-like_dom_sf"/>
</dbReference>
<dbReference type="InterPro" id="IPR019775">
    <property type="entry name" value="WD40_repeat_CS"/>
</dbReference>
<dbReference type="InterPro" id="IPR036322">
    <property type="entry name" value="WD40_repeat_dom_sf"/>
</dbReference>
<dbReference type="InterPro" id="IPR001680">
    <property type="entry name" value="WD40_rpt"/>
</dbReference>
<dbReference type="PANTHER" id="PTHR19872">
    <property type="entry name" value="UBIQUITIN LIGASE SPECIFICITY FACTOR/HREP PROTEIN"/>
    <property type="match status" value="1"/>
</dbReference>
<dbReference type="PANTHER" id="PTHR19872:SF9">
    <property type="entry name" value="UBIQUITIN-BINDING SDF UBIQUITIN LIGASE COMPLEX SUBUNIT"/>
    <property type="match status" value="1"/>
</dbReference>
<dbReference type="Pfam" id="PF12937">
    <property type="entry name" value="F-box-like"/>
    <property type="match status" value="1"/>
</dbReference>
<dbReference type="Pfam" id="PF00400">
    <property type="entry name" value="WD40"/>
    <property type="match status" value="6"/>
</dbReference>
<dbReference type="PRINTS" id="PR00320">
    <property type="entry name" value="GPROTEINBRPT"/>
</dbReference>
<dbReference type="SMART" id="SM00256">
    <property type="entry name" value="FBOX"/>
    <property type="match status" value="1"/>
</dbReference>
<dbReference type="SMART" id="SM00320">
    <property type="entry name" value="WD40"/>
    <property type="match status" value="7"/>
</dbReference>
<dbReference type="SUPFAM" id="SSF81383">
    <property type="entry name" value="F-box domain"/>
    <property type="match status" value="1"/>
</dbReference>
<dbReference type="SUPFAM" id="SSF50978">
    <property type="entry name" value="WD40 repeat-like"/>
    <property type="match status" value="1"/>
</dbReference>
<dbReference type="PROSITE" id="PS50181">
    <property type="entry name" value="FBOX"/>
    <property type="match status" value="1"/>
</dbReference>
<dbReference type="PROSITE" id="PS00678">
    <property type="entry name" value="WD_REPEATS_1"/>
    <property type="match status" value="4"/>
</dbReference>
<dbReference type="PROSITE" id="PS50082">
    <property type="entry name" value="WD_REPEATS_2"/>
    <property type="match status" value="7"/>
</dbReference>
<dbReference type="PROSITE" id="PS50294">
    <property type="entry name" value="WD_REPEATS_REGION"/>
    <property type="match status" value="1"/>
</dbReference>
<reference key="1">
    <citation type="journal article" date="2008" name="PLoS Genet.">
        <title>Genomic islands in the pathogenic filamentous fungus Aspergillus fumigatus.</title>
        <authorList>
            <person name="Fedorova N.D."/>
            <person name="Khaldi N."/>
            <person name="Joardar V.S."/>
            <person name="Maiti R."/>
            <person name="Amedeo P."/>
            <person name="Anderson M.J."/>
            <person name="Crabtree J."/>
            <person name="Silva J.C."/>
            <person name="Badger J.H."/>
            <person name="Albarraq A."/>
            <person name="Angiuoli S."/>
            <person name="Bussey H."/>
            <person name="Bowyer P."/>
            <person name="Cotty P.J."/>
            <person name="Dyer P.S."/>
            <person name="Egan A."/>
            <person name="Galens K."/>
            <person name="Fraser-Liggett C.M."/>
            <person name="Haas B.J."/>
            <person name="Inman J.M."/>
            <person name="Kent R."/>
            <person name="Lemieux S."/>
            <person name="Malavazi I."/>
            <person name="Orvis J."/>
            <person name="Roemer T."/>
            <person name="Ronning C.M."/>
            <person name="Sundaram J.P."/>
            <person name="Sutton G."/>
            <person name="Turner G."/>
            <person name="Venter J.C."/>
            <person name="White O.R."/>
            <person name="Whitty B.R."/>
            <person name="Youngman P."/>
            <person name="Wolfe K.H."/>
            <person name="Goldman G.H."/>
            <person name="Wortman J.R."/>
            <person name="Jiang B."/>
            <person name="Denning D.W."/>
            <person name="Nierman W.C."/>
        </authorList>
    </citation>
    <scope>NUCLEOTIDE SEQUENCE [LARGE SCALE GENOMIC DNA]</scope>
    <source>
        <strain>ATCC 1007 / CBS 513.65 / DSM 816 / NCTC 3887 / NRRL 1 / QM 1276 / 107</strain>
    </source>
</reference>
<evidence type="ECO:0000250" key="1"/>
<evidence type="ECO:0000255" key="2">
    <source>
        <dbReference type="PROSITE-ProRule" id="PRU00080"/>
    </source>
</evidence>
<evidence type="ECO:0000256" key="3">
    <source>
        <dbReference type="SAM" id="MobiDB-lite"/>
    </source>
</evidence>
<evidence type="ECO:0000305" key="4"/>
<sequence length="700" mass="78780">MDTQRLSLRKENGSAHSLLQDQTGLKENTMNIPRDSSFNSIFGPSEVVDDAGTDRDFKHESHKFSITRAMPEKLAGKNIAPFLAKHIPEQYAPLGSHAGEPVESSGANSRYCYRHRPDLKCRRQADEPTMDKLQRIAKELETLPQRDQQGIAHAWSIFSAAPAKHRKLLLQGIMAQCCFPQLSFISASVRDLIRIDFLTALPPEISFKILCYLDTTSLCKAAQVSRRWRALADDDVVWHRMCEQHIHRKCKKCGWGLPLLDRKRLRESKRQIELRAATWDISEQSTEDETGSPAPESASSNAKRKPESDDEDTALVKRHCTSIVPRLEKEKDGDYFITRYRPWKEVYKDRFKVGTNWKYGRCSVKVFKGHTNGIMCLQFEDNILATGSYDATIKIWDTETGEELRTLRGHESGIRCLQFDDTKLISGSMDRSLKVWNWRTGECISTYTGHRGGVIGLHFDATILASASVDKTVKIWNFEDKSTCLLRGHTDWVNAVRVDTNSRTVFSASDDCTIRLWDLDTKTCIRTFHGHVGQVQQVIPLPREFEFEDHDAECENDNVSVTSGDSPAASPRGIPGLDAGTSETQSSPFGPAFDNGRPAPPRYIVTSALDSTIRLWETSTGRCLRTFFGHLEGVWALAADTLRIVSGAEDRMVKIWDPRTGKCERTFTGHSGPVTCIGLGDSRFATGSEDCEVRMYGFQS</sequence>
<keyword id="KW-1185">Reference proteome</keyword>
<keyword id="KW-0677">Repeat</keyword>
<keyword id="KW-0804">Transcription</keyword>
<keyword id="KW-0805">Transcription regulation</keyword>
<keyword id="KW-0833">Ubl conjugation pathway</keyword>
<keyword id="KW-0853">WD repeat</keyword>
<gene>
    <name type="primary">sconB</name>
    <name type="ORF">ACLA_073500</name>
</gene>
<feature type="chain" id="PRO_0000397245" description="Probable E3 ubiquitin ligase complex SCF subunit sconB">
    <location>
        <begin position="1"/>
        <end position="700"/>
    </location>
</feature>
<feature type="domain" description="F-box" evidence="2">
    <location>
        <begin position="195"/>
        <end position="241"/>
    </location>
</feature>
<feature type="repeat" description="WD 1">
    <location>
        <begin position="369"/>
        <end position="406"/>
    </location>
</feature>
<feature type="repeat" description="WD 2">
    <location>
        <begin position="409"/>
        <end position="448"/>
    </location>
</feature>
<feature type="repeat" description="WD 3">
    <location>
        <begin position="450"/>
        <end position="486"/>
    </location>
</feature>
<feature type="repeat" description="WD 4">
    <location>
        <begin position="488"/>
        <end position="529"/>
    </location>
</feature>
<feature type="repeat" description="WD 5">
    <location>
        <begin position="583"/>
        <end position="626"/>
    </location>
</feature>
<feature type="repeat" description="WD 6">
    <location>
        <begin position="627"/>
        <end position="666"/>
    </location>
</feature>
<feature type="repeat" description="WD 7">
    <location>
        <begin position="669"/>
        <end position="700"/>
    </location>
</feature>
<feature type="region of interest" description="Disordered" evidence="3">
    <location>
        <begin position="282"/>
        <end position="313"/>
    </location>
</feature>
<feature type="region of interest" description="Disordered" evidence="3">
    <location>
        <begin position="556"/>
        <end position="598"/>
    </location>
</feature>
<accession>A1C7E4</accession>
<name>SCONB_ASPCL</name>
<protein>
    <recommendedName>
        <fullName>Probable E3 ubiquitin ligase complex SCF subunit sconB</fullName>
    </recommendedName>
    <alternativeName>
        <fullName>Sulfur controller B</fullName>
    </alternativeName>
    <alternativeName>
        <fullName>Sulfur metabolite repression control protein B</fullName>
    </alternativeName>
</protein>
<proteinExistence type="inferred from homology"/>